<gene>
    <name evidence="1" type="primary">dapB</name>
    <name type="ordered locus">BSU22490</name>
</gene>
<keyword id="KW-0028">Amino-acid biosynthesis</keyword>
<keyword id="KW-0963">Cytoplasm</keyword>
<keyword id="KW-0220">Diaminopimelate biosynthesis</keyword>
<keyword id="KW-0457">Lysine biosynthesis</keyword>
<keyword id="KW-0520">NAD</keyword>
<keyword id="KW-0521">NADP</keyword>
<keyword id="KW-0560">Oxidoreductase</keyword>
<keyword id="KW-1185">Reference proteome</keyword>
<accession>P42976</accession>
<accession>A3F358</accession>
<accession>A3F361</accession>
<feature type="chain" id="PRO_0000141411" description="4-hydroxy-tetrahydrodipicolinate reductase">
    <location>
        <begin position="1"/>
        <end position="267"/>
    </location>
</feature>
<feature type="active site" description="Proton donor/acceptor" evidence="1">
    <location>
        <position position="156"/>
    </location>
</feature>
<feature type="active site" description="Proton donor" evidence="1">
    <location>
        <position position="160"/>
    </location>
</feature>
<feature type="binding site" evidence="1">
    <location>
        <begin position="12"/>
        <end position="17"/>
    </location>
    <ligand>
        <name>NAD(+)</name>
        <dbReference type="ChEBI" id="CHEBI:57540"/>
    </ligand>
</feature>
<feature type="binding site" evidence="1">
    <location>
        <begin position="100"/>
        <end position="102"/>
    </location>
    <ligand>
        <name>NAD(+)</name>
        <dbReference type="ChEBI" id="CHEBI:57540"/>
    </ligand>
</feature>
<feature type="binding site" evidence="1">
    <location>
        <begin position="126"/>
        <end position="129"/>
    </location>
    <ligand>
        <name>NAD(+)</name>
        <dbReference type="ChEBI" id="CHEBI:57540"/>
    </ligand>
</feature>
<feature type="binding site" evidence="1">
    <location>
        <position position="157"/>
    </location>
    <ligand>
        <name>(S)-2,3,4,5-tetrahydrodipicolinate</name>
        <dbReference type="ChEBI" id="CHEBI:16845"/>
    </ligand>
</feature>
<feature type="binding site" evidence="1">
    <location>
        <begin position="166"/>
        <end position="167"/>
    </location>
    <ligand>
        <name>(S)-2,3,4,5-tetrahydrodipicolinate</name>
        <dbReference type="ChEBI" id="CHEBI:16845"/>
    </ligand>
</feature>
<sequence length="267" mass="29488">MSNETIKLVIAGPRGRMGQEAVKLAERTPHFDLVGAIDHTYDQQKLSDVMPVESDAFIYTDIHACFTETQPDVLIDLTTPEIGKVHTKIALEHGVRPVVGTTGFSEADLKELTSLTEEKGIGAIIAPNFALGAILMMKFSKMAANYFEDVEIIELHHDQKLDAPSGTALKTAEMISEVRKEKQQGHPDEKEILPGARGAEQNGIRLHSVRLPGLIAHQEVMFGMDGQTLQIRHDSYNRASFMSGVKLSVEQVMKIDQLVYGLENIID</sequence>
<reference key="1">
    <citation type="journal article" date="1996" name="Microbiology">
        <title>Sequence analysis of the Bacillus subtilis chromosome region between the serA and kdg loci cloned in a yeast artificial chromosome.</title>
        <authorList>
            <person name="Sorokin A.V."/>
            <person name="Azevedo V."/>
            <person name="Zumstein E."/>
            <person name="Galleron N."/>
            <person name="Ehrlich S.D."/>
            <person name="Serror P."/>
        </authorList>
    </citation>
    <scope>NUCLEOTIDE SEQUENCE [GENOMIC DNA]</scope>
    <source>
        <strain>168 / Marburg / ATCC 6051 / DSM 10 / JCM 1465 / NBRC 13719 / NCIMB 3610 / NRRL NRS-744 / VKM B-501</strain>
    </source>
</reference>
<reference key="2">
    <citation type="journal article" date="2008" name="J. Bacteriol.">
        <title>The origins of 168, W23, and other Bacillus subtilis legacy strains.</title>
        <authorList>
            <person name="Zeigler D.R."/>
            <person name="Pragai Z."/>
            <person name="Rodriguez S."/>
            <person name="Chevreux B."/>
            <person name="Muffler A."/>
            <person name="Albert T."/>
            <person name="Bai R."/>
            <person name="Wyss M."/>
            <person name="Perkins J.B."/>
        </authorList>
    </citation>
    <scope>NUCLEOTIDE SEQUENCE [GENOMIC DNA]</scope>
    <source>
        <strain>168</strain>
        <strain>168 / Marburg / ATCC 6051 / DSM 10 / JCM 1465 / NBRC 13719 / NCIMB 3610 / NRRL NRS-744 / VKM B-501</strain>
    </source>
</reference>
<reference key="3">
    <citation type="journal article" date="1997" name="Nature">
        <title>The complete genome sequence of the Gram-positive bacterium Bacillus subtilis.</title>
        <authorList>
            <person name="Kunst F."/>
            <person name="Ogasawara N."/>
            <person name="Moszer I."/>
            <person name="Albertini A.M."/>
            <person name="Alloni G."/>
            <person name="Azevedo V."/>
            <person name="Bertero M.G."/>
            <person name="Bessieres P."/>
            <person name="Bolotin A."/>
            <person name="Borchert S."/>
            <person name="Borriss R."/>
            <person name="Boursier L."/>
            <person name="Brans A."/>
            <person name="Braun M."/>
            <person name="Brignell S.C."/>
            <person name="Bron S."/>
            <person name="Brouillet S."/>
            <person name="Bruschi C.V."/>
            <person name="Caldwell B."/>
            <person name="Capuano V."/>
            <person name="Carter N.M."/>
            <person name="Choi S.-K."/>
            <person name="Codani J.-J."/>
            <person name="Connerton I.F."/>
            <person name="Cummings N.J."/>
            <person name="Daniel R.A."/>
            <person name="Denizot F."/>
            <person name="Devine K.M."/>
            <person name="Duesterhoeft A."/>
            <person name="Ehrlich S.D."/>
            <person name="Emmerson P.T."/>
            <person name="Entian K.-D."/>
            <person name="Errington J."/>
            <person name="Fabret C."/>
            <person name="Ferrari E."/>
            <person name="Foulger D."/>
            <person name="Fritz C."/>
            <person name="Fujita M."/>
            <person name="Fujita Y."/>
            <person name="Fuma S."/>
            <person name="Galizzi A."/>
            <person name="Galleron N."/>
            <person name="Ghim S.-Y."/>
            <person name="Glaser P."/>
            <person name="Goffeau A."/>
            <person name="Golightly E.J."/>
            <person name="Grandi G."/>
            <person name="Guiseppi G."/>
            <person name="Guy B.J."/>
            <person name="Haga K."/>
            <person name="Haiech J."/>
            <person name="Harwood C.R."/>
            <person name="Henaut A."/>
            <person name="Hilbert H."/>
            <person name="Holsappel S."/>
            <person name="Hosono S."/>
            <person name="Hullo M.-F."/>
            <person name="Itaya M."/>
            <person name="Jones L.-M."/>
            <person name="Joris B."/>
            <person name="Karamata D."/>
            <person name="Kasahara Y."/>
            <person name="Klaerr-Blanchard M."/>
            <person name="Klein C."/>
            <person name="Kobayashi Y."/>
            <person name="Koetter P."/>
            <person name="Koningstein G."/>
            <person name="Krogh S."/>
            <person name="Kumano M."/>
            <person name="Kurita K."/>
            <person name="Lapidus A."/>
            <person name="Lardinois S."/>
            <person name="Lauber J."/>
            <person name="Lazarevic V."/>
            <person name="Lee S.-M."/>
            <person name="Levine A."/>
            <person name="Liu H."/>
            <person name="Masuda S."/>
            <person name="Mauel C."/>
            <person name="Medigue C."/>
            <person name="Medina N."/>
            <person name="Mellado R.P."/>
            <person name="Mizuno M."/>
            <person name="Moestl D."/>
            <person name="Nakai S."/>
            <person name="Noback M."/>
            <person name="Noone D."/>
            <person name="O'Reilly M."/>
            <person name="Ogawa K."/>
            <person name="Ogiwara A."/>
            <person name="Oudega B."/>
            <person name="Park S.-H."/>
            <person name="Parro V."/>
            <person name="Pohl T.M."/>
            <person name="Portetelle D."/>
            <person name="Porwollik S."/>
            <person name="Prescott A.M."/>
            <person name="Presecan E."/>
            <person name="Pujic P."/>
            <person name="Purnelle B."/>
            <person name="Rapoport G."/>
            <person name="Rey M."/>
            <person name="Reynolds S."/>
            <person name="Rieger M."/>
            <person name="Rivolta C."/>
            <person name="Rocha E."/>
            <person name="Roche B."/>
            <person name="Rose M."/>
            <person name="Sadaie Y."/>
            <person name="Sato T."/>
            <person name="Scanlan E."/>
            <person name="Schleich S."/>
            <person name="Schroeter R."/>
            <person name="Scoffone F."/>
            <person name="Sekiguchi J."/>
            <person name="Sekowska A."/>
            <person name="Seror S.J."/>
            <person name="Serror P."/>
            <person name="Shin B.-S."/>
            <person name="Soldo B."/>
            <person name="Sorokin A."/>
            <person name="Tacconi E."/>
            <person name="Takagi T."/>
            <person name="Takahashi H."/>
            <person name="Takemaru K."/>
            <person name="Takeuchi M."/>
            <person name="Tamakoshi A."/>
            <person name="Tanaka T."/>
            <person name="Terpstra P."/>
            <person name="Tognoni A."/>
            <person name="Tosato V."/>
            <person name="Uchiyama S."/>
            <person name="Vandenbol M."/>
            <person name="Vannier F."/>
            <person name="Vassarotti A."/>
            <person name="Viari A."/>
            <person name="Wambutt R."/>
            <person name="Wedler E."/>
            <person name="Wedler H."/>
            <person name="Weitzenegger T."/>
            <person name="Winters P."/>
            <person name="Wipat A."/>
            <person name="Yamamoto H."/>
            <person name="Yamane K."/>
            <person name="Yasumoto K."/>
            <person name="Yata K."/>
            <person name="Yoshida K."/>
            <person name="Yoshikawa H.-F."/>
            <person name="Zumstein E."/>
            <person name="Yoshikawa H."/>
            <person name="Danchin A."/>
        </authorList>
    </citation>
    <scope>NUCLEOTIDE SEQUENCE [LARGE SCALE GENOMIC DNA]</scope>
    <source>
        <strain>168</strain>
    </source>
</reference>
<protein>
    <recommendedName>
        <fullName evidence="1">4-hydroxy-tetrahydrodipicolinate reductase</fullName>
        <shortName evidence="1">HTPA reductase</shortName>
        <ecNumber evidence="1">1.17.1.8</ecNumber>
    </recommendedName>
</protein>
<organism>
    <name type="scientific">Bacillus subtilis (strain 168)</name>
    <dbReference type="NCBI Taxonomy" id="224308"/>
    <lineage>
        <taxon>Bacteria</taxon>
        <taxon>Bacillati</taxon>
        <taxon>Bacillota</taxon>
        <taxon>Bacilli</taxon>
        <taxon>Bacillales</taxon>
        <taxon>Bacillaceae</taxon>
        <taxon>Bacillus</taxon>
    </lineage>
</organism>
<comment type="function">
    <text evidence="1">Catalyzes the conversion of 4-hydroxy-tetrahydrodipicolinate (HTPA) to tetrahydrodipicolinate.</text>
</comment>
<comment type="catalytic activity">
    <reaction evidence="1">
        <text>(S)-2,3,4,5-tetrahydrodipicolinate + NAD(+) + H2O = (2S,4S)-4-hydroxy-2,3,4,5-tetrahydrodipicolinate + NADH + H(+)</text>
        <dbReference type="Rhea" id="RHEA:35323"/>
        <dbReference type="ChEBI" id="CHEBI:15377"/>
        <dbReference type="ChEBI" id="CHEBI:15378"/>
        <dbReference type="ChEBI" id="CHEBI:16845"/>
        <dbReference type="ChEBI" id="CHEBI:57540"/>
        <dbReference type="ChEBI" id="CHEBI:57945"/>
        <dbReference type="ChEBI" id="CHEBI:67139"/>
        <dbReference type="EC" id="1.17.1.8"/>
    </reaction>
</comment>
<comment type="catalytic activity">
    <reaction evidence="1">
        <text>(S)-2,3,4,5-tetrahydrodipicolinate + NADP(+) + H2O = (2S,4S)-4-hydroxy-2,3,4,5-tetrahydrodipicolinate + NADPH + H(+)</text>
        <dbReference type="Rhea" id="RHEA:35331"/>
        <dbReference type="ChEBI" id="CHEBI:15377"/>
        <dbReference type="ChEBI" id="CHEBI:15378"/>
        <dbReference type="ChEBI" id="CHEBI:16845"/>
        <dbReference type="ChEBI" id="CHEBI:57783"/>
        <dbReference type="ChEBI" id="CHEBI:58349"/>
        <dbReference type="ChEBI" id="CHEBI:67139"/>
        <dbReference type="EC" id="1.17.1.8"/>
    </reaction>
</comment>
<comment type="pathway">
    <text evidence="1">Amino-acid biosynthesis; L-lysine biosynthesis via DAP pathway; (S)-tetrahydrodipicolinate from L-aspartate: step 4/4.</text>
</comment>
<comment type="subcellular location">
    <subcellularLocation>
        <location evidence="1">Cytoplasm</location>
    </subcellularLocation>
</comment>
<comment type="similarity">
    <text evidence="1">Belongs to the DapB family.</text>
</comment>
<comment type="caution">
    <text evidence="2">Was originally thought to be a dihydrodipicolinate reductase (DHDPR), catalyzing the conversion of dihydrodipicolinate to tetrahydrodipicolinate. However, it was shown in E.coli that the substrate of the enzymatic reaction is not dihydrodipicolinate (DHDP) but in fact (2S,4S)-4-hydroxy-2,3,4,5-tetrahydrodipicolinic acid (HTPA), the product released by the DapA-catalyzed reaction.</text>
</comment>
<proteinExistence type="inferred from homology"/>
<dbReference type="EC" id="1.17.1.8" evidence="1"/>
<dbReference type="EMBL" id="L38424">
    <property type="protein sequence ID" value="AAA92874.1"/>
    <property type="status" value="ALT_SEQ"/>
    <property type="molecule type" value="Genomic_DNA"/>
</dbReference>
<dbReference type="EMBL" id="L47709">
    <property type="protein sequence ID" value="AAB38442.1"/>
    <property type="molecule type" value="Genomic_DNA"/>
</dbReference>
<dbReference type="EMBL" id="EF191507">
    <property type="protein sequence ID" value="ABN11569.1"/>
    <property type="molecule type" value="Genomic_DNA"/>
</dbReference>
<dbReference type="EMBL" id="EF191508">
    <property type="protein sequence ID" value="ABN11572.1"/>
    <property type="molecule type" value="Genomic_DNA"/>
</dbReference>
<dbReference type="EMBL" id="AL009126">
    <property type="protein sequence ID" value="CAB14165.1"/>
    <property type="molecule type" value="Genomic_DNA"/>
</dbReference>
<dbReference type="PIR" id="A69613">
    <property type="entry name" value="A69613"/>
</dbReference>
<dbReference type="RefSeq" id="NP_390130.1">
    <property type="nucleotide sequence ID" value="NC_000964.3"/>
</dbReference>
<dbReference type="RefSeq" id="WP_003246190.1">
    <property type="nucleotide sequence ID" value="NZ_OZ025638.1"/>
</dbReference>
<dbReference type="SMR" id="P42976"/>
<dbReference type="FunCoup" id="P42976">
    <property type="interactions" value="710"/>
</dbReference>
<dbReference type="STRING" id="224308.BSU22490"/>
<dbReference type="PaxDb" id="224308-BSU22490"/>
<dbReference type="EnsemblBacteria" id="CAB14165">
    <property type="protein sequence ID" value="CAB14165"/>
    <property type="gene ID" value="BSU_22490"/>
</dbReference>
<dbReference type="GeneID" id="939024"/>
<dbReference type="KEGG" id="bsu:BSU22490"/>
<dbReference type="PATRIC" id="fig|224308.179.peg.2453"/>
<dbReference type="eggNOG" id="COG0289">
    <property type="taxonomic scope" value="Bacteria"/>
</dbReference>
<dbReference type="InParanoid" id="P42976"/>
<dbReference type="OrthoDB" id="9790352at2"/>
<dbReference type="PhylomeDB" id="P42976"/>
<dbReference type="BioCyc" id="BSUB:BSU22490-MONOMER"/>
<dbReference type="BioCyc" id="MetaCyc:MONOMER-6568"/>
<dbReference type="UniPathway" id="UPA00034">
    <property type="reaction ID" value="UER00018"/>
</dbReference>
<dbReference type="Proteomes" id="UP000001570">
    <property type="component" value="Chromosome"/>
</dbReference>
<dbReference type="GO" id="GO:0005829">
    <property type="term" value="C:cytosol"/>
    <property type="evidence" value="ECO:0000318"/>
    <property type="project" value="GO_Central"/>
</dbReference>
<dbReference type="GO" id="GO:0008839">
    <property type="term" value="F:4-hydroxy-tetrahydrodipicolinate reductase"/>
    <property type="evidence" value="ECO:0000318"/>
    <property type="project" value="GO_Central"/>
</dbReference>
<dbReference type="GO" id="GO:0051287">
    <property type="term" value="F:NAD binding"/>
    <property type="evidence" value="ECO:0007669"/>
    <property type="project" value="UniProtKB-UniRule"/>
</dbReference>
<dbReference type="GO" id="GO:0050661">
    <property type="term" value="F:NADP binding"/>
    <property type="evidence" value="ECO:0007669"/>
    <property type="project" value="UniProtKB-UniRule"/>
</dbReference>
<dbReference type="GO" id="GO:0016726">
    <property type="term" value="F:oxidoreductase activity, acting on CH or CH2 groups, NAD or NADP as acceptor"/>
    <property type="evidence" value="ECO:0007669"/>
    <property type="project" value="UniProtKB-UniRule"/>
</dbReference>
<dbReference type="GO" id="GO:0019877">
    <property type="term" value="P:diaminopimelate biosynthetic process"/>
    <property type="evidence" value="ECO:0000318"/>
    <property type="project" value="GO_Central"/>
</dbReference>
<dbReference type="GO" id="GO:0009089">
    <property type="term" value="P:lysine biosynthetic process via diaminopimelate"/>
    <property type="evidence" value="ECO:0007669"/>
    <property type="project" value="UniProtKB-UniRule"/>
</dbReference>
<dbReference type="CDD" id="cd02274">
    <property type="entry name" value="DHDPR_N"/>
    <property type="match status" value="1"/>
</dbReference>
<dbReference type="FunFam" id="3.30.360.10:FF:000009">
    <property type="entry name" value="4-hydroxy-tetrahydrodipicolinate reductase"/>
    <property type="match status" value="1"/>
</dbReference>
<dbReference type="FunFam" id="3.40.50.720:FF:000180">
    <property type="entry name" value="4-hydroxy-tetrahydrodipicolinate reductase"/>
    <property type="match status" value="1"/>
</dbReference>
<dbReference type="Gene3D" id="3.30.360.10">
    <property type="entry name" value="Dihydrodipicolinate Reductase, domain 2"/>
    <property type="match status" value="1"/>
</dbReference>
<dbReference type="Gene3D" id="3.40.50.720">
    <property type="entry name" value="NAD(P)-binding Rossmann-like Domain"/>
    <property type="match status" value="1"/>
</dbReference>
<dbReference type="HAMAP" id="MF_00102">
    <property type="entry name" value="DapB"/>
    <property type="match status" value="1"/>
</dbReference>
<dbReference type="InterPro" id="IPR022663">
    <property type="entry name" value="DapB_C"/>
</dbReference>
<dbReference type="InterPro" id="IPR000846">
    <property type="entry name" value="DapB_N"/>
</dbReference>
<dbReference type="InterPro" id="IPR022664">
    <property type="entry name" value="DapB_N_CS"/>
</dbReference>
<dbReference type="InterPro" id="IPR023940">
    <property type="entry name" value="DHDPR_bac"/>
</dbReference>
<dbReference type="InterPro" id="IPR036291">
    <property type="entry name" value="NAD(P)-bd_dom_sf"/>
</dbReference>
<dbReference type="NCBIfam" id="TIGR00036">
    <property type="entry name" value="dapB"/>
    <property type="match status" value="1"/>
</dbReference>
<dbReference type="PANTHER" id="PTHR20836:SF0">
    <property type="entry name" value="4-HYDROXY-TETRAHYDRODIPICOLINATE REDUCTASE 1, CHLOROPLASTIC-RELATED"/>
    <property type="match status" value="1"/>
</dbReference>
<dbReference type="PANTHER" id="PTHR20836">
    <property type="entry name" value="DIHYDRODIPICOLINATE REDUCTASE"/>
    <property type="match status" value="1"/>
</dbReference>
<dbReference type="Pfam" id="PF05173">
    <property type="entry name" value="DapB_C"/>
    <property type="match status" value="1"/>
</dbReference>
<dbReference type="Pfam" id="PF01113">
    <property type="entry name" value="DapB_N"/>
    <property type="match status" value="1"/>
</dbReference>
<dbReference type="PIRSF" id="PIRSF000161">
    <property type="entry name" value="DHPR"/>
    <property type="match status" value="1"/>
</dbReference>
<dbReference type="SUPFAM" id="SSF55347">
    <property type="entry name" value="Glyceraldehyde-3-phosphate dehydrogenase-like, C-terminal domain"/>
    <property type="match status" value="1"/>
</dbReference>
<dbReference type="SUPFAM" id="SSF51735">
    <property type="entry name" value="NAD(P)-binding Rossmann-fold domains"/>
    <property type="match status" value="1"/>
</dbReference>
<dbReference type="PROSITE" id="PS01298">
    <property type="entry name" value="DAPB"/>
    <property type="match status" value="1"/>
</dbReference>
<name>DAPB_BACSU</name>
<evidence type="ECO:0000255" key="1">
    <source>
        <dbReference type="HAMAP-Rule" id="MF_00102"/>
    </source>
</evidence>
<evidence type="ECO:0000305" key="2"/>